<organism>
    <name type="scientific">Drosophila melanogaster</name>
    <name type="common">Fruit fly</name>
    <dbReference type="NCBI Taxonomy" id="7227"/>
    <lineage>
        <taxon>Eukaryota</taxon>
        <taxon>Metazoa</taxon>
        <taxon>Ecdysozoa</taxon>
        <taxon>Arthropoda</taxon>
        <taxon>Hexapoda</taxon>
        <taxon>Insecta</taxon>
        <taxon>Pterygota</taxon>
        <taxon>Neoptera</taxon>
        <taxon>Endopterygota</taxon>
        <taxon>Diptera</taxon>
        <taxon>Brachycera</taxon>
        <taxon>Muscomorpha</taxon>
        <taxon>Ephydroidea</taxon>
        <taxon>Drosophilidae</taxon>
        <taxon>Drosophila</taxon>
        <taxon>Sophophora</taxon>
    </lineage>
</organism>
<evidence type="ECO:0000250" key="1"/>
<evidence type="ECO:0000256" key="2">
    <source>
        <dbReference type="SAM" id="MobiDB-lite"/>
    </source>
</evidence>
<evidence type="ECO:0000269" key="3">
    <source>
    </source>
</evidence>
<evidence type="ECO:0000305" key="4"/>
<evidence type="ECO:0000305" key="5">
    <source>
    </source>
</evidence>
<feature type="chain" id="PRO_0000146953" description="Histidine decarboxylase">
    <location>
        <begin position="1"/>
        <end position="847"/>
    </location>
</feature>
<feature type="region of interest" description="Disordered" evidence="2">
    <location>
        <begin position="575"/>
        <end position="662"/>
    </location>
</feature>
<feature type="region of interest" description="Disordered" evidence="2">
    <location>
        <begin position="769"/>
        <end position="798"/>
    </location>
</feature>
<feature type="region of interest" description="Disordered" evidence="2">
    <location>
        <begin position="813"/>
        <end position="847"/>
    </location>
</feature>
<feature type="compositionally biased region" description="Polar residues" evidence="2">
    <location>
        <begin position="575"/>
        <end position="605"/>
    </location>
</feature>
<feature type="compositionally biased region" description="Acidic residues" evidence="2">
    <location>
        <begin position="606"/>
        <end position="616"/>
    </location>
</feature>
<feature type="compositionally biased region" description="Low complexity" evidence="2">
    <location>
        <begin position="634"/>
        <end position="657"/>
    </location>
</feature>
<feature type="compositionally biased region" description="Low complexity" evidence="2">
    <location>
        <begin position="769"/>
        <end position="787"/>
    </location>
</feature>
<feature type="compositionally biased region" description="Polar residues" evidence="2">
    <location>
        <begin position="832"/>
        <end position="847"/>
    </location>
</feature>
<feature type="binding site" evidence="1">
    <location>
        <position position="80"/>
    </location>
    <ligand>
        <name>substrate</name>
    </ligand>
</feature>
<feature type="binding site" evidence="1">
    <location>
        <position position="193"/>
    </location>
    <ligand>
        <name>substrate</name>
    </ligand>
</feature>
<feature type="modified residue" description="N6-(pyridoxal phosphate)lysine" evidence="1">
    <location>
        <position position="304"/>
    </location>
</feature>
<feature type="sequence conflict" description="In Ref. 1; CAA49989." evidence="4" ref="1">
    <original>D</original>
    <variation>E</variation>
    <location>
        <position position="214"/>
    </location>
</feature>
<feature type="sequence conflict" description="In Ref. 1; CAA49989." evidence="4" ref="1">
    <original>I</original>
    <variation>T</variation>
    <location>
        <position position="650"/>
    </location>
</feature>
<feature type="sequence conflict" description="In Ref. 1; CAA49989." evidence="4" ref="1">
    <original>P</original>
    <variation>A</variation>
    <location>
        <position position="658"/>
    </location>
</feature>
<feature type="sequence conflict" description="In Ref. 1; CAA49989." evidence="4" ref="1">
    <original>P</original>
    <variation>H</variation>
    <location>
        <position position="668"/>
    </location>
</feature>
<feature type="sequence conflict" description="In Ref. 1; CAA49989." evidence="4" ref="1">
    <original>Q</original>
    <variation>H</variation>
    <location>
        <position position="679"/>
    </location>
</feature>
<feature type="sequence conflict" description="In Ref. 1; CAA49989." evidence="4" ref="1">
    <original>I</original>
    <variation>M</variation>
    <location>
        <position position="740"/>
    </location>
</feature>
<feature type="sequence conflict" description="In Ref. 1; CAA49989." evidence="4" ref="1">
    <original>Q</original>
    <variation>R</variation>
    <location>
        <position position="829"/>
    </location>
</feature>
<dbReference type="EC" id="4.1.1.22" evidence="5"/>
<dbReference type="EMBL" id="X70644">
    <property type="protein sequence ID" value="CAA49989.1"/>
    <property type="molecule type" value="mRNA"/>
</dbReference>
<dbReference type="EMBL" id="AE013599">
    <property type="protein sequence ID" value="AAF58823.1"/>
    <property type="molecule type" value="Genomic_DNA"/>
</dbReference>
<dbReference type="PIR" id="S36337">
    <property type="entry name" value="S36337"/>
</dbReference>
<dbReference type="RefSeq" id="NP_001260855.1">
    <property type="nucleotide sequence ID" value="NM_001273926.1"/>
</dbReference>
<dbReference type="RefSeq" id="NP_001286274.1">
    <property type="nucleotide sequence ID" value="NM_001299345.1"/>
</dbReference>
<dbReference type="RefSeq" id="NP_523679.2">
    <property type="nucleotide sequence ID" value="NM_078955.3"/>
</dbReference>
<dbReference type="SMR" id="Q05733"/>
<dbReference type="BioGRID" id="61897">
    <property type="interactions" value="2"/>
</dbReference>
<dbReference type="FunCoup" id="Q05733">
    <property type="interactions" value="118"/>
</dbReference>
<dbReference type="IntAct" id="Q05733">
    <property type="interactions" value="2"/>
</dbReference>
<dbReference type="STRING" id="7227.FBpp0311591"/>
<dbReference type="GlyGen" id="Q05733">
    <property type="glycosylation" value="2 sites"/>
</dbReference>
<dbReference type="PaxDb" id="7227-FBpp0304256"/>
<dbReference type="EnsemblMetazoa" id="FBtr0088333">
    <property type="protein sequence ID" value="FBpp0087422"/>
    <property type="gene ID" value="FBgn0005619"/>
</dbReference>
<dbReference type="EnsemblMetazoa" id="FBtr0331923">
    <property type="protein sequence ID" value="FBpp0304256"/>
    <property type="gene ID" value="FBgn0005619"/>
</dbReference>
<dbReference type="EnsemblMetazoa" id="FBtr0345474">
    <property type="protein sequence ID" value="FBpp0311591"/>
    <property type="gene ID" value="FBgn0005619"/>
</dbReference>
<dbReference type="GeneID" id="36076"/>
<dbReference type="KEGG" id="dme:Dmel_CG3454"/>
<dbReference type="AGR" id="FB:FBgn0005619"/>
<dbReference type="CTD" id="3067"/>
<dbReference type="FlyBase" id="FBgn0005619">
    <property type="gene designation" value="Hdc"/>
</dbReference>
<dbReference type="VEuPathDB" id="VectorBase:FBgn0005619"/>
<dbReference type="eggNOG" id="KOG0628">
    <property type="taxonomic scope" value="Eukaryota"/>
</dbReference>
<dbReference type="GeneTree" id="ENSGT00940000157938"/>
<dbReference type="HOGENOM" id="CLU_011856_2_0_1"/>
<dbReference type="InParanoid" id="Q05733"/>
<dbReference type="OMA" id="GMVKMHY"/>
<dbReference type="OrthoDB" id="639767at2759"/>
<dbReference type="PhylomeDB" id="Q05733"/>
<dbReference type="BRENDA" id="4.1.1.22">
    <property type="organism ID" value="1994"/>
</dbReference>
<dbReference type="Reactome" id="R-DME-70921">
    <property type="pathway name" value="Histidine catabolism"/>
</dbReference>
<dbReference type="ChiTaRS" id="Hdc">
    <property type="organism name" value="fly"/>
</dbReference>
<dbReference type="GenomeRNAi" id="36076"/>
<dbReference type="PRO" id="PR:Q05733"/>
<dbReference type="Proteomes" id="UP000000803">
    <property type="component" value="Chromosome 2R"/>
</dbReference>
<dbReference type="Bgee" id="FBgn0005619">
    <property type="expression patterns" value="Expressed in photoreceptor cell R7 (Drosophila) in insect head and 18 other cell types or tissues"/>
</dbReference>
<dbReference type="ExpressionAtlas" id="Q05733">
    <property type="expression patterns" value="baseline and differential"/>
</dbReference>
<dbReference type="GO" id="GO:0005737">
    <property type="term" value="C:cytoplasm"/>
    <property type="evidence" value="ECO:0000318"/>
    <property type="project" value="GO_Central"/>
</dbReference>
<dbReference type="GO" id="GO:0004398">
    <property type="term" value="F:histidine decarboxylase activity"/>
    <property type="evidence" value="ECO:0000315"/>
    <property type="project" value="FlyBase"/>
</dbReference>
<dbReference type="GO" id="GO:0030170">
    <property type="term" value="F:pyridoxal phosphate binding"/>
    <property type="evidence" value="ECO:0007669"/>
    <property type="project" value="InterPro"/>
</dbReference>
<dbReference type="GO" id="GO:0042423">
    <property type="term" value="P:catecholamine biosynthetic process"/>
    <property type="evidence" value="ECO:0007669"/>
    <property type="project" value="UniProtKB-KW"/>
</dbReference>
<dbReference type="GO" id="GO:0001694">
    <property type="term" value="P:histamine biosynthetic process"/>
    <property type="evidence" value="ECO:0000318"/>
    <property type="project" value="GO_Central"/>
</dbReference>
<dbReference type="GO" id="GO:0006548">
    <property type="term" value="P:L-histidine catabolic process"/>
    <property type="evidence" value="ECO:0000318"/>
    <property type="project" value="GO_Central"/>
</dbReference>
<dbReference type="GO" id="GO:0043052">
    <property type="term" value="P:thermotaxis"/>
    <property type="evidence" value="ECO:0000315"/>
    <property type="project" value="FlyBase"/>
</dbReference>
<dbReference type="CDD" id="cd06450">
    <property type="entry name" value="DOPA_deC_like"/>
    <property type="match status" value="1"/>
</dbReference>
<dbReference type="FunFam" id="1.20.1340.10:FF:000001">
    <property type="entry name" value="Histidine decarboxylase"/>
    <property type="match status" value="1"/>
</dbReference>
<dbReference type="FunFam" id="3.40.640.10:FF:000025">
    <property type="entry name" value="Histidine decarboxylase"/>
    <property type="match status" value="1"/>
</dbReference>
<dbReference type="FunFam" id="3.90.1150.10:FF:000018">
    <property type="entry name" value="Histidine decarboxylase"/>
    <property type="match status" value="1"/>
</dbReference>
<dbReference type="Gene3D" id="3.90.1150.10">
    <property type="entry name" value="Aspartate Aminotransferase, domain 1"/>
    <property type="match status" value="1"/>
</dbReference>
<dbReference type="Gene3D" id="1.20.1340.10">
    <property type="entry name" value="dopa decarboxylase, N-terminal domain"/>
    <property type="match status" value="1"/>
</dbReference>
<dbReference type="Gene3D" id="3.40.640.10">
    <property type="entry name" value="Type I PLP-dependent aspartate aminotransferase-like (Major domain)"/>
    <property type="match status" value="1"/>
</dbReference>
<dbReference type="InterPro" id="IPR010977">
    <property type="entry name" value="Aromatic_deC"/>
</dbReference>
<dbReference type="InterPro" id="IPR002129">
    <property type="entry name" value="PyrdxlP-dep_de-COase"/>
</dbReference>
<dbReference type="InterPro" id="IPR015424">
    <property type="entry name" value="PyrdxlP-dep_Trfase"/>
</dbReference>
<dbReference type="InterPro" id="IPR015421">
    <property type="entry name" value="PyrdxlP-dep_Trfase_major"/>
</dbReference>
<dbReference type="InterPro" id="IPR015422">
    <property type="entry name" value="PyrdxlP-dep_Trfase_small"/>
</dbReference>
<dbReference type="InterPro" id="IPR021115">
    <property type="entry name" value="Pyridoxal-P_BS"/>
</dbReference>
<dbReference type="PANTHER" id="PTHR11999">
    <property type="entry name" value="GROUP II PYRIDOXAL-5-PHOSPHATE DECARBOXYLASE"/>
    <property type="match status" value="1"/>
</dbReference>
<dbReference type="PANTHER" id="PTHR11999:SF68">
    <property type="entry name" value="HISTIDINE DECARBOXYLASE"/>
    <property type="match status" value="1"/>
</dbReference>
<dbReference type="Pfam" id="PF00282">
    <property type="entry name" value="Pyridoxal_deC"/>
    <property type="match status" value="1"/>
</dbReference>
<dbReference type="PRINTS" id="PR00800">
    <property type="entry name" value="YHDCRBOXLASE"/>
</dbReference>
<dbReference type="SUPFAM" id="SSF53383">
    <property type="entry name" value="PLP-dependent transferases"/>
    <property type="match status" value="1"/>
</dbReference>
<dbReference type="PROSITE" id="PS00392">
    <property type="entry name" value="DDC_GAD_HDC_YDC"/>
    <property type="match status" value="1"/>
</dbReference>
<accession>Q05733</accession>
<accession>Q9V5I3</accession>
<protein>
    <recommendedName>
        <fullName>Histidine decarboxylase</fullName>
        <shortName>HDC</shortName>
        <ecNumber evidence="5">4.1.1.22</ecNumber>
    </recommendedName>
</protein>
<sequence>MDFKEYRQRGKEMVDYIADYLENIRERRVFPDVSPGYMRQLLPESAPIEGEPWPKIFSDVERIVMPGITHWQSPHMHAYFPALNSMPSLLGDMLADAINCLGFTWASSPACTELEIIVMNWLGKMIGLPDAFLHLSSQSQGGGVLQTTASEATLVCLLAGRTRAIQRFHERHPGYQDAEINARLVAYCSDQAHSSVEKAALIGLVRMRYIEADDDLAMRGKLLREAIEDDIKQGLVPFWVCATLGTTGSCSFDNLEEIGIVCAEHHLWLHVDAAYAGSAFICPEFRTWLRGIERADSIAFNPSKWLMVHFDATALWVRDSTAVHRTFNVEPLYLQHENSGVAVDFMHWQIPLSRRFRALKVWFVLRSYGIKGLQRHIREGVRLAQKFEALVLADHRFELPAKRHLGLVVFRIRGDNEITEKLLKRLNHRGNLHCIPSSLKGQYVIRFTITSTHTTLDDIVKDWMEIRQVASTVLEEMNITISNRVYLKETKEKNEAFGSSLLLSNSPLSPKVVNGSFAAIFDADEFLAKTYAGVRIAHQESPSMRRRVRGILMSGKQFSLDSHMDVVVQTTLDAGNGATRTSTTNSYGHTTSAAQANSERQASIQEDNEESPEETELLSLCRTSNVPSPEHAHSLSTPSRSCSSSSHSLIHSLTQSSPRSSPVNQFRPITLCAVPSQSQLSMPLAMPLPNRNVTVSVDSLLNPVTTCNVYHGKRFLEPLENLAQTSASFSSSIFRLPTPIATPTRESPEDPDWPAKTFSQLLLERYSSQSQSLGNNSSTESSSLSGGATPTPTPMSSLDELVTPLLLSFASPSQPMLSAHGIGEGQREQGSDSDATVCSTTSSMESL</sequence>
<proteinExistence type="evidence at protein level"/>
<comment type="function">
    <text evidence="3 5">Required in photoreceptor transmitter synthesis (PubMed:8096176). Catlayzes the conversion of L-histidine to histamine (Probable).</text>
</comment>
<comment type="catalytic activity">
    <reaction evidence="5">
        <text>L-histidine + H(+) = histamine + CO2</text>
        <dbReference type="Rhea" id="RHEA:20840"/>
        <dbReference type="ChEBI" id="CHEBI:15378"/>
        <dbReference type="ChEBI" id="CHEBI:16526"/>
        <dbReference type="ChEBI" id="CHEBI:57595"/>
        <dbReference type="ChEBI" id="CHEBI:58432"/>
        <dbReference type="EC" id="4.1.1.22"/>
    </reaction>
    <physiologicalReaction direction="left-to-right" evidence="5">
        <dbReference type="Rhea" id="RHEA:20841"/>
    </physiologicalReaction>
</comment>
<comment type="cofactor">
    <cofactor>
        <name>pyridoxal 5'-phosphate</name>
        <dbReference type="ChEBI" id="CHEBI:597326"/>
    </cofactor>
</comment>
<comment type="subunit">
    <text evidence="1">Homodimer.</text>
</comment>
<comment type="tissue specificity">
    <text evidence="3">Localized primarily to the photoreceptors, in the eye.</text>
</comment>
<comment type="similarity">
    <text evidence="4">Belongs to the group II decarboxylase family.</text>
</comment>
<name>DCHS_DROME</name>
<keyword id="KW-0127">Catecholamine biosynthesis</keyword>
<keyword id="KW-0210">Decarboxylase</keyword>
<keyword id="KW-0456">Lyase</keyword>
<keyword id="KW-0663">Pyridoxal phosphate</keyword>
<keyword id="KW-1185">Reference proteome</keyword>
<reference key="1">
    <citation type="journal article" date="1993" name="EMBO J.">
        <title>Genetic and molecular identification of a Drosophila histidine decarboxylase gene required in photoreceptor transmitter synthesis.</title>
        <authorList>
            <person name="Burg M.G."/>
            <person name="Sarthy P.V."/>
            <person name="Koliantz G."/>
            <person name="Pak W.L."/>
        </authorList>
    </citation>
    <scope>NUCLEOTIDE SEQUENCE [MRNA]</scope>
    <scope>CATALYTIC ACTIVITY</scope>
    <scope>TISSUE SPECIFICITY</scope>
</reference>
<reference key="2">
    <citation type="journal article" date="2000" name="Science">
        <title>The genome sequence of Drosophila melanogaster.</title>
        <authorList>
            <person name="Adams M.D."/>
            <person name="Celniker S.E."/>
            <person name="Holt R.A."/>
            <person name="Evans C.A."/>
            <person name="Gocayne J.D."/>
            <person name="Amanatides P.G."/>
            <person name="Scherer S.E."/>
            <person name="Li P.W."/>
            <person name="Hoskins R.A."/>
            <person name="Galle R.F."/>
            <person name="George R.A."/>
            <person name="Lewis S.E."/>
            <person name="Richards S."/>
            <person name="Ashburner M."/>
            <person name="Henderson S.N."/>
            <person name="Sutton G.G."/>
            <person name="Wortman J.R."/>
            <person name="Yandell M.D."/>
            <person name="Zhang Q."/>
            <person name="Chen L.X."/>
            <person name="Brandon R.C."/>
            <person name="Rogers Y.-H.C."/>
            <person name="Blazej R.G."/>
            <person name="Champe M."/>
            <person name="Pfeiffer B.D."/>
            <person name="Wan K.H."/>
            <person name="Doyle C."/>
            <person name="Baxter E.G."/>
            <person name="Helt G."/>
            <person name="Nelson C.R."/>
            <person name="Miklos G.L.G."/>
            <person name="Abril J.F."/>
            <person name="Agbayani A."/>
            <person name="An H.-J."/>
            <person name="Andrews-Pfannkoch C."/>
            <person name="Baldwin D."/>
            <person name="Ballew R.M."/>
            <person name="Basu A."/>
            <person name="Baxendale J."/>
            <person name="Bayraktaroglu L."/>
            <person name="Beasley E.M."/>
            <person name="Beeson K.Y."/>
            <person name="Benos P.V."/>
            <person name="Berman B.P."/>
            <person name="Bhandari D."/>
            <person name="Bolshakov S."/>
            <person name="Borkova D."/>
            <person name="Botchan M.R."/>
            <person name="Bouck J."/>
            <person name="Brokstein P."/>
            <person name="Brottier P."/>
            <person name="Burtis K.C."/>
            <person name="Busam D.A."/>
            <person name="Butler H."/>
            <person name="Cadieu E."/>
            <person name="Center A."/>
            <person name="Chandra I."/>
            <person name="Cherry J.M."/>
            <person name="Cawley S."/>
            <person name="Dahlke C."/>
            <person name="Davenport L.B."/>
            <person name="Davies P."/>
            <person name="de Pablos B."/>
            <person name="Delcher A."/>
            <person name="Deng Z."/>
            <person name="Mays A.D."/>
            <person name="Dew I."/>
            <person name="Dietz S.M."/>
            <person name="Dodson K."/>
            <person name="Doup L.E."/>
            <person name="Downes M."/>
            <person name="Dugan-Rocha S."/>
            <person name="Dunkov B.C."/>
            <person name="Dunn P."/>
            <person name="Durbin K.J."/>
            <person name="Evangelista C.C."/>
            <person name="Ferraz C."/>
            <person name="Ferriera S."/>
            <person name="Fleischmann W."/>
            <person name="Fosler C."/>
            <person name="Gabrielian A.E."/>
            <person name="Garg N.S."/>
            <person name="Gelbart W.M."/>
            <person name="Glasser K."/>
            <person name="Glodek A."/>
            <person name="Gong F."/>
            <person name="Gorrell J.H."/>
            <person name="Gu Z."/>
            <person name="Guan P."/>
            <person name="Harris M."/>
            <person name="Harris N.L."/>
            <person name="Harvey D.A."/>
            <person name="Heiman T.J."/>
            <person name="Hernandez J.R."/>
            <person name="Houck J."/>
            <person name="Hostin D."/>
            <person name="Houston K.A."/>
            <person name="Howland T.J."/>
            <person name="Wei M.-H."/>
            <person name="Ibegwam C."/>
            <person name="Jalali M."/>
            <person name="Kalush F."/>
            <person name="Karpen G.H."/>
            <person name="Ke Z."/>
            <person name="Kennison J.A."/>
            <person name="Ketchum K.A."/>
            <person name="Kimmel B.E."/>
            <person name="Kodira C.D."/>
            <person name="Kraft C.L."/>
            <person name="Kravitz S."/>
            <person name="Kulp D."/>
            <person name="Lai Z."/>
            <person name="Lasko P."/>
            <person name="Lei Y."/>
            <person name="Levitsky A.A."/>
            <person name="Li J.H."/>
            <person name="Li Z."/>
            <person name="Liang Y."/>
            <person name="Lin X."/>
            <person name="Liu X."/>
            <person name="Mattei B."/>
            <person name="McIntosh T.C."/>
            <person name="McLeod M.P."/>
            <person name="McPherson D."/>
            <person name="Merkulov G."/>
            <person name="Milshina N.V."/>
            <person name="Mobarry C."/>
            <person name="Morris J."/>
            <person name="Moshrefi A."/>
            <person name="Mount S.M."/>
            <person name="Moy M."/>
            <person name="Murphy B."/>
            <person name="Murphy L."/>
            <person name="Muzny D.M."/>
            <person name="Nelson D.L."/>
            <person name="Nelson D.R."/>
            <person name="Nelson K.A."/>
            <person name="Nixon K."/>
            <person name="Nusskern D.R."/>
            <person name="Pacleb J.M."/>
            <person name="Palazzolo M."/>
            <person name="Pittman G.S."/>
            <person name="Pan S."/>
            <person name="Pollard J."/>
            <person name="Puri V."/>
            <person name="Reese M.G."/>
            <person name="Reinert K."/>
            <person name="Remington K."/>
            <person name="Saunders R.D.C."/>
            <person name="Scheeler F."/>
            <person name="Shen H."/>
            <person name="Shue B.C."/>
            <person name="Siden-Kiamos I."/>
            <person name="Simpson M."/>
            <person name="Skupski M.P."/>
            <person name="Smith T.J."/>
            <person name="Spier E."/>
            <person name="Spradling A.C."/>
            <person name="Stapleton M."/>
            <person name="Strong R."/>
            <person name="Sun E."/>
            <person name="Svirskas R."/>
            <person name="Tector C."/>
            <person name="Turner R."/>
            <person name="Venter E."/>
            <person name="Wang A.H."/>
            <person name="Wang X."/>
            <person name="Wang Z.-Y."/>
            <person name="Wassarman D.A."/>
            <person name="Weinstock G.M."/>
            <person name="Weissenbach J."/>
            <person name="Williams S.M."/>
            <person name="Woodage T."/>
            <person name="Worley K.C."/>
            <person name="Wu D."/>
            <person name="Yang S."/>
            <person name="Yao Q.A."/>
            <person name="Ye J."/>
            <person name="Yeh R.-F."/>
            <person name="Zaveri J.S."/>
            <person name="Zhan M."/>
            <person name="Zhang G."/>
            <person name="Zhao Q."/>
            <person name="Zheng L."/>
            <person name="Zheng X.H."/>
            <person name="Zhong F.N."/>
            <person name="Zhong W."/>
            <person name="Zhou X."/>
            <person name="Zhu S.C."/>
            <person name="Zhu X."/>
            <person name="Smith H.O."/>
            <person name="Gibbs R.A."/>
            <person name="Myers E.W."/>
            <person name="Rubin G.M."/>
            <person name="Venter J.C."/>
        </authorList>
    </citation>
    <scope>NUCLEOTIDE SEQUENCE [LARGE SCALE GENOMIC DNA]</scope>
    <source>
        <strain>Berkeley</strain>
    </source>
</reference>
<reference key="3">
    <citation type="journal article" date="2002" name="Genome Biol.">
        <title>Annotation of the Drosophila melanogaster euchromatic genome: a systematic review.</title>
        <authorList>
            <person name="Misra S."/>
            <person name="Crosby M.A."/>
            <person name="Mungall C.J."/>
            <person name="Matthews B.B."/>
            <person name="Campbell K.S."/>
            <person name="Hradecky P."/>
            <person name="Huang Y."/>
            <person name="Kaminker J.S."/>
            <person name="Millburn G.H."/>
            <person name="Prochnik S.E."/>
            <person name="Smith C.D."/>
            <person name="Tupy J.L."/>
            <person name="Whitfield E.J."/>
            <person name="Bayraktaroglu L."/>
            <person name="Berman B.P."/>
            <person name="Bettencourt B.R."/>
            <person name="Celniker S.E."/>
            <person name="de Grey A.D.N.J."/>
            <person name="Drysdale R.A."/>
            <person name="Harris N.L."/>
            <person name="Richter J."/>
            <person name="Russo S."/>
            <person name="Schroeder A.J."/>
            <person name="Shu S.Q."/>
            <person name="Stapleton M."/>
            <person name="Yamada C."/>
            <person name="Ashburner M."/>
            <person name="Gelbart W.M."/>
            <person name="Rubin G.M."/>
            <person name="Lewis S.E."/>
        </authorList>
    </citation>
    <scope>GENOME REANNOTATION</scope>
    <source>
        <strain>Berkeley</strain>
    </source>
</reference>
<gene>
    <name type="primary">Hdc</name>
    <name type="ORF">CG3454</name>
</gene>